<evidence type="ECO:0000250" key="1">
    <source>
        <dbReference type="UniProtKB" id="P10549"/>
    </source>
</evidence>
<evidence type="ECO:0000255" key="2"/>
<evidence type="ECO:0000303" key="3">
    <source>
    </source>
</evidence>
<evidence type="ECO:0000305" key="4"/>
<protein>
    <recommendedName>
        <fullName>Photosystem II extrinsic protein O</fullName>
        <shortName>PsbO</shortName>
    </recommendedName>
    <alternativeName>
        <fullName evidence="3">Photosystem II manganese-stabilizing polypeptide</fullName>
        <shortName evidence="3">MSP</shortName>
    </alternativeName>
</protein>
<accession>P13907</accession>
<gene>
    <name type="primary">psbO</name>
    <name evidence="3" type="synonym">woxA</name>
    <name type="ordered locus">all3854</name>
</gene>
<name>PSBO_NOSS1</name>
<keyword id="KW-0464">Manganese</keyword>
<keyword id="KW-0472">Membrane</keyword>
<keyword id="KW-0602">Photosynthesis</keyword>
<keyword id="KW-0604">Photosystem II</keyword>
<keyword id="KW-1185">Reference proteome</keyword>
<keyword id="KW-0732">Signal</keyword>
<keyword id="KW-0793">Thylakoid</keyword>
<organism>
    <name type="scientific">Nostoc sp. (strain PCC 7120 / SAG 25.82 / UTEX 2576)</name>
    <dbReference type="NCBI Taxonomy" id="103690"/>
    <lineage>
        <taxon>Bacteria</taxon>
        <taxon>Bacillati</taxon>
        <taxon>Cyanobacteriota</taxon>
        <taxon>Cyanophyceae</taxon>
        <taxon>Nostocales</taxon>
        <taxon>Nostocaceae</taxon>
        <taxon>Nostoc</taxon>
    </lineage>
</organism>
<proteinExistence type="inferred from homology"/>
<sequence>MRYRALIVAFLAVCLGLLTACSDAPASSTRDILTYEQIRGTGLANKCPQLTETSRGSIPLDSSKSYVLKELCLEPTNFFVKEEPANKRQTAEFVAGKLLTRYTSTIDQVSGDLKFNDDSSLTFVEKDGLDFQAITVQLPGGERVPFLFTIKNLVAQTQPGLSSLNTSTDFEGTFKVPSYRGAAFLDPKGRGVVSGYDNAVALPAQADDEDLTRTNVKRAEILNGKISLQIAKVDSSSGEIAGTFESEQPSDTDLGADEPKEVKIRGIFYARVE</sequence>
<dbReference type="EMBL" id="X15554">
    <property type="protein sequence ID" value="CAA33560.1"/>
    <property type="molecule type" value="Genomic_DNA"/>
</dbReference>
<dbReference type="EMBL" id="BA000019">
    <property type="protein sequence ID" value="BAB75553.1"/>
    <property type="molecule type" value="Genomic_DNA"/>
</dbReference>
<dbReference type="PIR" id="AG2287">
    <property type="entry name" value="AG2287"/>
</dbReference>
<dbReference type="PIR" id="S06736">
    <property type="entry name" value="S06736"/>
</dbReference>
<dbReference type="RefSeq" id="WP_010997995.1">
    <property type="nucleotide sequence ID" value="NZ_RSCN01000011.1"/>
</dbReference>
<dbReference type="SMR" id="P13907"/>
<dbReference type="STRING" id="103690.gene:10495896"/>
<dbReference type="KEGG" id="ana:all3854"/>
<dbReference type="eggNOG" id="ENOG502Z7ZP">
    <property type="taxonomic scope" value="Bacteria"/>
</dbReference>
<dbReference type="OrthoDB" id="479833at2"/>
<dbReference type="Proteomes" id="UP000002483">
    <property type="component" value="Chromosome"/>
</dbReference>
<dbReference type="GO" id="GO:0009654">
    <property type="term" value="C:photosystem II oxygen evolving complex"/>
    <property type="evidence" value="ECO:0007669"/>
    <property type="project" value="InterPro"/>
</dbReference>
<dbReference type="GO" id="GO:0031676">
    <property type="term" value="C:plasma membrane-derived thylakoid membrane"/>
    <property type="evidence" value="ECO:0007669"/>
    <property type="project" value="UniProtKB-SubCell"/>
</dbReference>
<dbReference type="GO" id="GO:0010242">
    <property type="term" value="F:oxygen evolving activity"/>
    <property type="evidence" value="ECO:0007669"/>
    <property type="project" value="InterPro"/>
</dbReference>
<dbReference type="GO" id="GO:0010207">
    <property type="term" value="P:photosystem II assembly"/>
    <property type="evidence" value="ECO:0007669"/>
    <property type="project" value="InterPro"/>
</dbReference>
<dbReference type="GO" id="GO:0042549">
    <property type="term" value="P:photosystem II stabilization"/>
    <property type="evidence" value="ECO:0007669"/>
    <property type="project" value="InterPro"/>
</dbReference>
<dbReference type="FunFam" id="3.30.2050.10:FF:000001">
    <property type="entry name" value="Oxygen-evolving enhancer protein 1, chloroplastic"/>
    <property type="match status" value="1"/>
</dbReference>
<dbReference type="Gene3D" id="3.30.2050.10">
    <property type="entry name" value="photosynthetic oxygen evolving center domain"/>
    <property type="match status" value="1"/>
</dbReference>
<dbReference type="Gene3D" id="2.40.160.30">
    <property type="entry name" value="Photosystem II, cytochrome c-550 precursor"/>
    <property type="match status" value="1"/>
</dbReference>
<dbReference type="InterPro" id="IPR011250">
    <property type="entry name" value="OMP/PagP_b-brl"/>
</dbReference>
<dbReference type="InterPro" id="IPR002628">
    <property type="entry name" value="PsbO"/>
</dbReference>
<dbReference type="PANTHER" id="PTHR34058">
    <property type="entry name" value="OXYGEN-EVOLVING ENHANCER PROTEIN 1-2, CHLOROPLASTIC"/>
    <property type="match status" value="1"/>
</dbReference>
<dbReference type="Pfam" id="PF01716">
    <property type="entry name" value="MSP"/>
    <property type="match status" value="1"/>
</dbReference>
<dbReference type="SUPFAM" id="SSF56925">
    <property type="entry name" value="OMPA-like"/>
    <property type="match status" value="1"/>
</dbReference>
<comment type="function">
    <text evidence="1">One of the extrinsic, lumenal subunits of photosystem II (PSII), which stabilize and protect the oxygen-evolving complex. PSII is a light-driven water plastoquinone oxidoreductase, using light energy to abstract electrons from H(2)O, generating a proton gradient subsequently used for ATP formation. Required for dimerization of PSII and for binding of PsbQ to PSII.</text>
</comment>
<comment type="subunit">
    <text evidence="1">PSII is composed of 1 copy each of membrane proteins PsbA, PsbB, PsbC, PsbD, PsbE, PsbF, PsbH, PsbI, PsbJ, PsbK, PsbL, PsbM, PsbT, PsbX, PsbY, PsbZ, Psb30/Ycf12, peripheral proteins PsbO, CyanoQ (PsbQ), PsbU, PsbV and a large number of cofactors. It forms dimeric complexes.</text>
</comment>
<comment type="subcellular location">
    <subcellularLocation>
        <location evidence="1">Cellular thylakoid membrane</location>
        <topology evidence="1">Peripheral membrane protein</topology>
        <orientation evidence="1">Lumenal side</orientation>
    </subcellularLocation>
</comment>
<comment type="similarity">
    <text evidence="4">Belongs to the PsbO family.</text>
</comment>
<reference key="1">
    <citation type="journal article" date="1989" name="Plant Mol. Biol.">
        <title>Nucleotide sequence of the gene encoding the 33 kDa water oxidizing polypeptide in Anabaena sp. strain PCC 7120 and its expression in Escherichia coli.</title>
        <authorList>
            <person name="Borthakur D."/>
            <person name="Haselkorn R."/>
        </authorList>
    </citation>
    <scope>NUCLEOTIDE SEQUENCE [GENOMIC DNA]</scope>
    <source>
        <strain>PCC 7120 / SAG 25.82 / UTEX 2576</strain>
    </source>
</reference>
<reference key="2">
    <citation type="journal article" date="2001" name="DNA Res.">
        <title>Complete genomic sequence of the filamentous nitrogen-fixing cyanobacterium Anabaena sp. strain PCC 7120.</title>
        <authorList>
            <person name="Kaneko T."/>
            <person name="Nakamura Y."/>
            <person name="Wolk C.P."/>
            <person name="Kuritz T."/>
            <person name="Sasamoto S."/>
            <person name="Watanabe A."/>
            <person name="Iriguchi M."/>
            <person name="Ishikawa A."/>
            <person name="Kawashima K."/>
            <person name="Kimura T."/>
            <person name="Kishida Y."/>
            <person name="Kohara M."/>
            <person name="Matsumoto M."/>
            <person name="Matsuno A."/>
            <person name="Muraki A."/>
            <person name="Nakazaki N."/>
            <person name="Shimpo S."/>
            <person name="Sugimoto M."/>
            <person name="Takazawa M."/>
            <person name="Yamada M."/>
            <person name="Yasuda M."/>
            <person name="Tabata S."/>
        </authorList>
    </citation>
    <scope>NUCLEOTIDE SEQUENCE [LARGE SCALE GENOMIC DNA]</scope>
    <source>
        <strain>PCC 7120 / SAG 25.82 / UTEX 2576</strain>
    </source>
</reference>
<feature type="signal peptide" evidence="2">
    <location>
        <begin position="1"/>
        <end position="26"/>
    </location>
</feature>
<feature type="chain" id="PRO_0000029565" description="Photosystem II extrinsic protein O">
    <location>
        <begin position="27"/>
        <end position="273"/>
    </location>
</feature>
<feature type="sequence conflict" description="In Ref. 1; CAA33560." evidence="4" ref="1">
    <original>F</original>
    <variation>I</variation>
    <location>
        <position position="10"/>
    </location>
</feature>
<feature type="sequence conflict" description="In Ref. 1; CAA33560." evidence="4" ref="1">
    <original>DAP</original>
    <variation>ERS</variation>
    <location>
        <begin position="23"/>
        <end position="25"/>
    </location>
</feature>
<feature type="sequence conflict" description="In Ref. 1; CAA33560." evidence="4" ref="1">
    <original>A</original>
    <variation>S</variation>
    <location>
        <position position="182"/>
    </location>
</feature>